<sequence length="413" mass="43250">MGQQGQSGTSAGNPDSLKQDKISKSGDSLTTQDGNATGQQEATNYTNLPPNLTPTADWPNALSFTNKNNAHRAQLFLRGLLGSIPVLVNRSGSDSNKFQATDQKWSYTDLQSDQTKLNLPAYGEVNGLLNPALVETYFGNTRAGGSGSNTTSSPGIGFKIPEQNNDSKATLITPGLAWTPQDVGNLVVSGTSLSFQLGGWLVSFTDFIKPRAGYLGLQLSGLDASDSDQRELIWAKRPWAAFRGSWVNRLGRVESVWDLKGVWADQAQLAAQAATSEASGSALAPHPNALAFQVSVVEASAYSSSTSSSGSGSSSNTSPYLHLIKPKKVESTTQLDQGLKNLLDPNQVRTKLRQSFGTDHSTQPQSLKTTTPVFGTSSGNIGSVLSGGGAGGGSSGSGQSGVDLSPVERVSGH</sequence>
<keyword id="KW-1185">Reference proteome</keyword>
<feature type="chain" id="PRO_0000210709" description="Putative adhesin P1-like protein MPN_144">
    <location>
        <begin position="1"/>
        <end position="413"/>
    </location>
</feature>
<feature type="region of interest" description="Disordered" evidence="1">
    <location>
        <begin position="1"/>
        <end position="60"/>
    </location>
</feature>
<feature type="region of interest" description="Disordered" evidence="1">
    <location>
        <begin position="355"/>
        <end position="413"/>
    </location>
</feature>
<feature type="compositionally biased region" description="Polar residues" evidence="1">
    <location>
        <begin position="1"/>
        <end position="13"/>
    </location>
</feature>
<feature type="compositionally biased region" description="Polar residues" evidence="1">
    <location>
        <begin position="25"/>
        <end position="54"/>
    </location>
</feature>
<feature type="compositionally biased region" description="Polar residues" evidence="1">
    <location>
        <begin position="355"/>
        <end position="376"/>
    </location>
</feature>
<feature type="compositionally biased region" description="Gly residues" evidence="1">
    <location>
        <begin position="385"/>
        <end position="399"/>
    </location>
</feature>
<reference key="1">
    <citation type="journal article" date="1996" name="Nucleic Acids Res.">
        <title>Complete sequence analysis of the genome of the bacterium Mycoplasma pneumoniae.</title>
        <authorList>
            <person name="Himmelreich R."/>
            <person name="Hilbert H."/>
            <person name="Plagens H."/>
            <person name="Pirkl E."/>
            <person name="Li B.-C."/>
            <person name="Herrmann R."/>
        </authorList>
    </citation>
    <scope>NUCLEOTIDE SEQUENCE [LARGE SCALE GENOMIC DNA]</scope>
    <source>
        <strain>ATCC 29342 / M129 / Subtype 1</strain>
    </source>
</reference>
<proteinExistence type="uncertain"/>
<evidence type="ECO:0000256" key="1">
    <source>
        <dbReference type="SAM" id="MobiDB-lite"/>
    </source>
</evidence>
<evidence type="ECO:0000305" key="2"/>
<protein>
    <recommendedName>
        <fullName>Putative adhesin P1-like protein MPN_144</fullName>
    </recommendedName>
</protein>
<comment type="similarity">
    <text evidence="2">Belongs to the adhesin P1 family.</text>
</comment>
<comment type="caution">
    <text evidence="2">Could be the product of a pseudogene.</text>
</comment>
<name>Y144_MYCPN</name>
<dbReference type="EMBL" id="U00089">
    <property type="protein sequence ID" value="AAB95658.1"/>
    <property type="molecule type" value="Genomic_DNA"/>
</dbReference>
<dbReference type="PIR" id="S73336">
    <property type="entry name" value="S73336"/>
</dbReference>
<dbReference type="RefSeq" id="NP_109832.1">
    <property type="nucleotide sequence ID" value="NC_000912.1"/>
</dbReference>
<dbReference type="SMR" id="P75142"/>
<dbReference type="EnsemblBacteria" id="AAB95658">
    <property type="protein sequence ID" value="AAB95658"/>
    <property type="gene ID" value="MPN_144"/>
</dbReference>
<dbReference type="KEGG" id="mpn:MPN_144"/>
<dbReference type="PATRIC" id="fig|272634.6.peg.159"/>
<dbReference type="HOGENOM" id="CLU_022417_0_0_14"/>
<dbReference type="OrthoDB" id="403686at2"/>
<dbReference type="BioCyc" id="MPNE272634:G1GJ3-245-MONOMER"/>
<dbReference type="Proteomes" id="UP000000808">
    <property type="component" value="Chromosome"/>
</dbReference>
<dbReference type="InterPro" id="IPR004940">
    <property type="entry name" value="Adhesin_P1_C"/>
</dbReference>
<dbReference type="Pfam" id="PF03257">
    <property type="entry name" value="Adhesin_P1_C"/>
    <property type="match status" value="1"/>
</dbReference>
<gene>
    <name type="ordered locus">MPN_144</name>
    <name type="ORF">E07_orf413</name>
    <name type="ORF">MP010</name>
</gene>
<accession>P75142</accession>
<organism>
    <name type="scientific">Mycoplasma pneumoniae (strain ATCC 29342 / M129 / Subtype 1)</name>
    <name type="common">Mycoplasmoides pneumoniae</name>
    <dbReference type="NCBI Taxonomy" id="272634"/>
    <lineage>
        <taxon>Bacteria</taxon>
        <taxon>Bacillati</taxon>
        <taxon>Mycoplasmatota</taxon>
        <taxon>Mycoplasmoidales</taxon>
        <taxon>Mycoplasmoidaceae</taxon>
        <taxon>Mycoplasmoides</taxon>
    </lineage>
</organism>